<keyword id="KW-0238">DNA-binding</keyword>
<keyword id="KW-1185">Reference proteome</keyword>
<keyword id="KW-0678">Repressor</keyword>
<keyword id="KW-0346">Stress response</keyword>
<keyword id="KW-1277">Toxin-antitoxin system</keyword>
<keyword id="KW-0804">Transcription</keyword>
<keyword id="KW-0805">Transcription regulation</keyword>
<dbReference type="EMBL" id="AE005674">
    <property type="protein sequence ID" value="AAN43138.1"/>
    <property type="molecule type" value="Genomic_DNA"/>
</dbReference>
<dbReference type="EMBL" id="AE014073">
    <property type="protein sequence ID" value="AAP17029.1"/>
    <property type="molecule type" value="Genomic_DNA"/>
</dbReference>
<dbReference type="RefSeq" id="NP_707431.1">
    <property type="nucleotide sequence ID" value="NC_004337.2"/>
</dbReference>
<dbReference type="RefSeq" id="WP_000534858.1">
    <property type="nucleotide sequence ID" value="NZ_WPGV01000221.1"/>
</dbReference>
<dbReference type="BMRB" id="P0C080"/>
<dbReference type="SMR" id="P0C080"/>
<dbReference type="STRING" id="198214.SF1549"/>
<dbReference type="PaxDb" id="198214-SF1549"/>
<dbReference type="GeneID" id="1024732"/>
<dbReference type="GeneID" id="98387559"/>
<dbReference type="KEGG" id="sfl:SF1549"/>
<dbReference type="KEGG" id="sfx:S1670"/>
<dbReference type="PATRIC" id="fig|198214.7.peg.1831"/>
<dbReference type="HOGENOM" id="CLU_169573_0_0_6"/>
<dbReference type="Proteomes" id="UP000001006">
    <property type="component" value="Chromosome"/>
</dbReference>
<dbReference type="Proteomes" id="UP000002673">
    <property type="component" value="Chromosome"/>
</dbReference>
<dbReference type="GO" id="GO:0043565">
    <property type="term" value="F:sequence-specific DNA binding"/>
    <property type="evidence" value="ECO:0007669"/>
    <property type="project" value="UniProtKB-ARBA"/>
</dbReference>
<dbReference type="GO" id="GO:0006351">
    <property type="term" value="P:DNA-templated transcription"/>
    <property type="evidence" value="ECO:0007669"/>
    <property type="project" value="TreeGrafter"/>
</dbReference>
<dbReference type="GO" id="GO:0006355">
    <property type="term" value="P:regulation of DNA-templated transcription"/>
    <property type="evidence" value="ECO:0007669"/>
    <property type="project" value="InterPro"/>
</dbReference>
<dbReference type="FunFam" id="1.10.1220.10:FF:000005">
    <property type="entry name" value="Bifunctional antitoxin/transcriptional repressor RelB"/>
    <property type="match status" value="1"/>
</dbReference>
<dbReference type="Gene3D" id="1.10.1220.10">
    <property type="entry name" value="Met repressor-like"/>
    <property type="match status" value="1"/>
</dbReference>
<dbReference type="InterPro" id="IPR013321">
    <property type="entry name" value="Arc_rbn_hlx_hlx"/>
</dbReference>
<dbReference type="InterPro" id="IPR007337">
    <property type="entry name" value="RelB/DinJ"/>
</dbReference>
<dbReference type="NCBIfam" id="NF008412">
    <property type="entry name" value="PRK11235.1"/>
    <property type="match status" value="1"/>
</dbReference>
<dbReference type="NCBIfam" id="TIGR02384">
    <property type="entry name" value="RelB_DinJ"/>
    <property type="match status" value="1"/>
</dbReference>
<dbReference type="PANTHER" id="PTHR38781">
    <property type="entry name" value="ANTITOXIN DINJ-RELATED"/>
    <property type="match status" value="1"/>
</dbReference>
<dbReference type="PANTHER" id="PTHR38781:SF1">
    <property type="entry name" value="ANTITOXIN DINJ-RELATED"/>
    <property type="match status" value="1"/>
</dbReference>
<dbReference type="Pfam" id="PF04221">
    <property type="entry name" value="RelB"/>
    <property type="match status" value="1"/>
</dbReference>
<name>RELB_SHIFL</name>
<feature type="chain" id="PRO_0000097244" description="Antitoxin RelB">
    <location>
        <begin position="1"/>
        <end position="79"/>
    </location>
</feature>
<proteinExistence type="inferred from homology"/>
<protein>
    <recommendedName>
        <fullName>Antitoxin RelB</fullName>
    </recommendedName>
</protein>
<reference key="1">
    <citation type="journal article" date="2002" name="Nucleic Acids Res.">
        <title>Genome sequence of Shigella flexneri 2a: insights into pathogenicity through comparison with genomes of Escherichia coli K12 and O157.</title>
        <authorList>
            <person name="Jin Q."/>
            <person name="Yuan Z."/>
            <person name="Xu J."/>
            <person name="Wang Y."/>
            <person name="Shen Y."/>
            <person name="Lu W."/>
            <person name="Wang J."/>
            <person name="Liu H."/>
            <person name="Yang J."/>
            <person name="Yang F."/>
            <person name="Zhang X."/>
            <person name="Zhang J."/>
            <person name="Yang G."/>
            <person name="Wu H."/>
            <person name="Qu D."/>
            <person name="Dong J."/>
            <person name="Sun L."/>
            <person name="Xue Y."/>
            <person name="Zhao A."/>
            <person name="Gao Y."/>
            <person name="Zhu J."/>
            <person name="Kan B."/>
            <person name="Ding K."/>
            <person name="Chen S."/>
            <person name="Cheng H."/>
            <person name="Yao Z."/>
            <person name="He B."/>
            <person name="Chen R."/>
            <person name="Ma D."/>
            <person name="Qiang B."/>
            <person name="Wen Y."/>
            <person name="Hou Y."/>
            <person name="Yu J."/>
        </authorList>
    </citation>
    <scope>NUCLEOTIDE SEQUENCE [LARGE SCALE GENOMIC DNA]</scope>
    <source>
        <strain>301 / Serotype 2a</strain>
    </source>
</reference>
<reference key="2">
    <citation type="journal article" date="2003" name="Infect. Immun.">
        <title>Complete genome sequence and comparative genomics of Shigella flexneri serotype 2a strain 2457T.</title>
        <authorList>
            <person name="Wei J."/>
            <person name="Goldberg M.B."/>
            <person name="Burland V."/>
            <person name="Venkatesan M.M."/>
            <person name="Deng W."/>
            <person name="Fournier G."/>
            <person name="Mayhew G.F."/>
            <person name="Plunkett G. III"/>
            <person name="Rose D.J."/>
            <person name="Darling A."/>
            <person name="Mau B."/>
            <person name="Perna N.T."/>
            <person name="Payne S.M."/>
            <person name="Runyen-Janecky L.J."/>
            <person name="Zhou S."/>
            <person name="Schwartz D.C."/>
            <person name="Blattner F.R."/>
        </authorList>
    </citation>
    <scope>NUCLEOTIDE SEQUENCE [LARGE SCALE GENOMIC DNA]</scope>
    <source>
        <strain>ATCC 700930 / 2457T / Serotype 2a</strain>
    </source>
</reference>
<reference key="3">
    <citation type="journal article" date="2005" name="Nucleic Acids Res.">
        <title>Toxin-antitoxin loci are highly abundant in free-living but lost from host-associated prokaryotes.</title>
        <authorList>
            <person name="Pandey D.P."/>
            <person name="Gerdes K."/>
        </authorList>
    </citation>
    <scope>POSSIBLE FUNCTION</scope>
    <source>
        <strain>301 / Serotype 2a</strain>
        <strain>ATCC 700930 / 2457T / Serotype 2a</strain>
    </source>
</reference>
<gene>
    <name type="primary">relB</name>
    <name type="synonym">relB1</name>
    <name type="ordered locus">SF1549</name>
    <name type="ordered locus">S1670</name>
</gene>
<accession>P0C080</accession>
<accession>P07007</accession>
<organism>
    <name type="scientific">Shigella flexneri</name>
    <dbReference type="NCBI Taxonomy" id="623"/>
    <lineage>
        <taxon>Bacteria</taxon>
        <taxon>Pseudomonadati</taxon>
        <taxon>Pseudomonadota</taxon>
        <taxon>Gammaproteobacteria</taxon>
        <taxon>Enterobacterales</taxon>
        <taxon>Enterobacteriaceae</taxon>
        <taxon>Shigella</taxon>
    </lineage>
</organism>
<comment type="function">
    <text evidence="1">Antitoxin component of a type II toxin-antitoxin (TA) system. Counteracts the effect of RelE via direct protein-protein interaction, enabling the reversion of translation inhibition. Also acts as an autorepressor of relBE transcription. Increased transcription rate of relBE and activation of relE is consistent with a lower level of RelB in starved cells due to degradation of RelB by protease Lon (By similarity).</text>
</comment>
<comment type="subunit">
    <text evidence="1">Probably a homotetramer in solution. Binds DNA as a RelE(2)-RelB(2) heterotetramer (By similarity).</text>
</comment>
<comment type="similarity">
    <text evidence="2">Belongs to the RelB/DinJ antitoxin family.</text>
</comment>
<evidence type="ECO:0000250" key="1"/>
<evidence type="ECO:0000305" key="2"/>
<sequence>MGSINLRIDDELKARSYAALEKMGVTPSEALRLMLEYIADNERLPFKQTLLSDEDAELVEIVKERLRNPKPVRVTLDEL</sequence>